<protein>
    <recommendedName>
        <fullName evidence="1">3-deoxy-manno-octulosonate cytidylyltransferase</fullName>
        <ecNumber evidence="1">2.7.7.38</ecNumber>
    </recommendedName>
    <alternativeName>
        <fullName evidence="1">CMP-2-keto-3-deoxyoctulosonic acid synthase</fullName>
        <shortName evidence="1">CKS</shortName>
        <shortName evidence="1">CMP-KDO synthase</shortName>
    </alternativeName>
</protein>
<name>KDSB_FUSNN</name>
<sequence>MKFLGIIPARYSSTRLEGKPLKMIEGHTMIEWVYKRAKKSNLDSLIVATDDERIYNEVINFGGQAIMTSKNHTNGTSRIAEVCEKMTEYDTIINIQGDEPLIEYEMINSLIETFKENKDLKMATLKHKLLNKEEIKNPNNVKVVCDKNDYAIYFSRSVIPYPRKNGNISYFKHIGIYGYKRDFVIEYSKMLATPLEEIESLEQLRVLENGYKIKVLETTHSLIGVDTQENLEQVINYIKENNIKI</sequence>
<organism>
    <name type="scientific">Fusobacterium nucleatum subsp. nucleatum (strain ATCC 25586 / DSM 15643 / BCRC 10681 / CIP 101130 / JCM 8532 / KCTC 2640 / LMG 13131 / VPI 4355)</name>
    <dbReference type="NCBI Taxonomy" id="190304"/>
    <lineage>
        <taxon>Bacteria</taxon>
        <taxon>Fusobacteriati</taxon>
        <taxon>Fusobacteriota</taxon>
        <taxon>Fusobacteriia</taxon>
        <taxon>Fusobacteriales</taxon>
        <taxon>Fusobacteriaceae</taxon>
        <taxon>Fusobacterium</taxon>
    </lineage>
</organism>
<evidence type="ECO:0000255" key="1">
    <source>
        <dbReference type="HAMAP-Rule" id="MF_00057"/>
    </source>
</evidence>
<feature type="chain" id="PRO_0000188504" description="3-deoxy-manno-octulosonate cytidylyltransferase">
    <location>
        <begin position="1"/>
        <end position="245"/>
    </location>
</feature>
<accession>Q8RFA8</accession>
<comment type="function">
    <text evidence="1">Activates KDO (a required 8-carbon sugar) for incorporation into bacterial lipopolysaccharide in Gram-negative bacteria.</text>
</comment>
<comment type="catalytic activity">
    <reaction evidence="1">
        <text>3-deoxy-alpha-D-manno-oct-2-ulosonate + CTP = CMP-3-deoxy-beta-D-manno-octulosonate + diphosphate</text>
        <dbReference type="Rhea" id="RHEA:23448"/>
        <dbReference type="ChEBI" id="CHEBI:33019"/>
        <dbReference type="ChEBI" id="CHEBI:37563"/>
        <dbReference type="ChEBI" id="CHEBI:85986"/>
        <dbReference type="ChEBI" id="CHEBI:85987"/>
        <dbReference type="EC" id="2.7.7.38"/>
    </reaction>
</comment>
<comment type="pathway">
    <text evidence="1">Nucleotide-sugar biosynthesis; CMP-3-deoxy-D-manno-octulosonate biosynthesis; CMP-3-deoxy-D-manno-octulosonate from 3-deoxy-D-manno-octulosonate and CTP: step 1/1.</text>
</comment>
<comment type="pathway">
    <text evidence="1">Bacterial outer membrane biogenesis; lipopolysaccharide biosynthesis.</text>
</comment>
<comment type="subcellular location">
    <subcellularLocation>
        <location evidence="1">Cytoplasm</location>
    </subcellularLocation>
</comment>
<comment type="similarity">
    <text evidence="1">Belongs to the KdsB family.</text>
</comment>
<gene>
    <name evidence="1" type="primary">kdsB</name>
    <name type="ordered locus">FN0807</name>
</gene>
<keyword id="KW-0963">Cytoplasm</keyword>
<keyword id="KW-0448">Lipopolysaccharide biosynthesis</keyword>
<keyword id="KW-0548">Nucleotidyltransferase</keyword>
<keyword id="KW-1185">Reference proteome</keyword>
<keyword id="KW-0808">Transferase</keyword>
<reference key="1">
    <citation type="journal article" date="2002" name="J. Bacteriol.">
        <title>Genome sequence and analysis of the oral bacterium Fusobacterium nucleatum strain ATCC 25586.</title>
        <authorList>
            <person name="Kapatral V."/>
            <person name="Anderson I."/>
            <person name="Ivanova N."/>
            <person name="Reznik G."/>
            <person name="Los T."/>
            <person name="Lykidis A."/>
            <person name="Bhattacharyya A."/>
            <person name="Bartman A."/>
            <person name="Gardner W."/>
            <person name="Grechkin G."/>
            <person name="Zhu L."/>
            <person name="Vasieva O."/>
            <person name="Chu L."/>
            <person name="Kogan Y."/>
            <person name="Chaga O."/>
            <person name="Goltsman E."/>
            <person name="Bernal A."/>
            <person name="Larsen N."/>
            <person name="D'Souza M."/>
            <person name="Walunas T."/>
            <person name="Pusch G."/>
            <person name="Haselkorn R."/>
            <person name="Fonstein M."/>
            <person name="Kyrpides N.C."/>
            <person name="Overbeek R."/>
        </authorList>
    </citation>
    <scope>NUCLEOTIDE SEQUENCE [LARGE SCALE GENOMIC DNA]</scope>
    <source>
        <strain>ATCC 25586 / DSM 15643 / BCRC 10681 / CIP 101130 / JCM 8532 / KCTC 2640 / LMG 13131 / VPI 4355</strain>
    </source>
</reference>
<dbReference type="EC" id="2.7.7.38" evidence="1"/>
<dbReference type="EMBL" id="AE009951">
    <property type="protein sequence ID" value="AAL95003.1"/>
    <property type="molecule type" value="Genomic_DNA"/>
</dbReference>
<dbReference type="RefSeq" id="NP_603704.1">
    <property type="nucleotide sequence ID" value="NC_003454.1"/>
</dbReference>
<dbReference type="RefSeq" id="WP_011016663.1">
    <property type="nucleotide sequence ID" value="NZ_OZ209243.1"/>
</dbReference>
<dbReference type="SMR" id="Q8RFA8"/>
<dbReference type="STRING" id="190304.FN0807"/>
<dbReference type="PaxDb" id="190304-FN0807"/>
<dbReference type="EnsemblBacteria" id="AAL95003">
    <property type="protein sequence ID" value="AAL95003"/>
    <property type="gene ID" value="FN0807"/>
</dbReference>
<dbReference type="GeneID" id="79783796"/>
<dbReference type="KEGG" id="fnu:FN0807"/>
<dbReference type="PATRIC" id="fig|190304.8.peg.1369"/>
<dbReference type="eggNOG" id="COG1212">
    <property type="taxonomic scope" value="Bacteria"/>
</dbReference>
<dbReference type="HOGENOM" id="CLU_065038_0_1_0"/>
<dbReference type="InParanoid" id="Q8RFA8"/>
<dbReference type="BioCyc" id="FNUC190304:G1FZS-1392-MONOMER"/>
<dbReference type="UniPathway" id="UPA00030"/>
<dbReference type="UniPathway" id="UPA00358">
    <property type="reaction ID" value="UER00476"/>
</dbReference>
<dbReference type="Proteomes" id="UP000002521">
    <property type="component" value="Chromosome"/>
</dbReference>
<dbReference type="GO" id="GO:0005829">
    <property type="term" value="C:cytosol"/>
    <property type="evidence" value="ECO:0000318"/>
    <property type="project" value="GO_Central"/>
</dbReference>
<dbReference type="GO" id="GO:0008690">
    <property type="term" value="F:3-deoxy-manno-octulosonate cytidylyltransferase activity"/>
    <property type="evidence" value="ECO:0000318"/>
    <property type="project" value="GO_Central"/>
</dbReference>
<dbReference type="GO" id="GO:0033468">
    <property type="term" value="P:CMP-keto-3-deoxy-D-manno-octulosonic acid biosynthetic process"/>
    <property type="evidence" value="ECO:0007669"/>
    <property type="project" value="UniProtKB-UniRule"/>
</dbReference>
<dbReference type="GO" id="GO:0009103">
    <property type="term" value="P:lipopolysaccharide biosynthetic process"/>
    <property type="evidence" value="ECO:0007669"/>
    <property type="project" value="UniProtKB-UniRule"/>
</dbReference>
<dbReference type="CDD" id="cd02517">
    <property type="entry name" value="CMP-KDO-Synthetase"/>
    <property type="match status" value="1"/>
</dbReference>
<dbReference type="FunFam" id="3.90.550.10:FF:000401">
    <property type="entry name" value="3-deoxy-manno-octulosonate cytidylyltransferase"/>
    <property type="match status" value="1"/>
</dbReference>
<dbReference type="Gene3D" id="3.90.550.10">
    <property type="entry name" value="Spore Coat Polysaccharide Biosynthesis Protein SpsA, Chain A"/>
    <property type="match status" value="1"/>
</dbReference>
<dbReference type="HAMAP" id="MF_00057">
    <property type="entry name" value="KdsB"/>
    <property type="match status" value="1"/>
</dbReference>
<dbReference type="InterPro" id="IPR003329">
    <property type="entry name" value="Cytidylyl_trans"/>
</dbReference>
<dbReference type="InterPro" id="IPR004528">
    <property type="entry name" value="KdsB"/>
</dbReference>
<dbReference type="InterPro" id="IPR029044">
    <property type="entry name" value="Nucleotide-diphossugar_trans"/>
</dbReference>
<dbReference type="NCBIfam" id="TIGR00466">
    <property type="entry name" value="kdsB"/>
    <property type="match status" value="1"/>
</dbReference>
<dbReference type="NCBIfam" id="NF003950">
    <property type="entry name" value="PRK05450.1-3"/>
    <property type="match status" value="1"/>
</dbReference>
<dbReference type="NCBIfam" id="NF003952">
    <property type="entry name" value="PRK05450.1-5"/>
    <property type="match status" value="1"/>
</dbReference>
<dbReference type="NCBIfam" id="NF009905">
    <property type="entry name" value="PRK13368.1"/>
    <property type="match status" value="1"/>
</dbReference>
<dbReference type="PANTHER" id="PTHR42866">
    <property type="entry name" value="3-DEOXY-MANNO-OCTULOSONATE CYTIDYLYLTRANSFERASE"/>
    <property type="match status" value="1"/>
</dbReference>
<dbReference type="PANTHER" id="PTHR42866:SF2">
    <property type="entry name" value="3-DEOXY-MANNO-OCTULOSONATE CYTIDYLYLTRANSFERASE, MITOCHONDRIAL"/>
    <property type="match status" value="1"/>
</dbReference>
<dbReference type="Pfam" id="PF02348">
    <property type="entry name" value="CTP_transf_3"/>
    <property type="match status" value="1"/>
</dbReference>
<dbReference type="SUPFAM" id="SSF53448">
    <property type="entry name" value="Nucleotide-diphospho-sugar transferases"/>
    <property type="match status" value="1"/>
</dbReference>
<proteinExistence type="inferred from homology"/>